<protein>
    <recommendedName>
        <fullName evidence="1">Argininosuccinate synthase</fullName>
        <ecNumber evidence="1">6.3.4.5</ecNumber>
    </recommendedName>
    <alternativeName>
        <fullName evidence="1">Citrulline--aspartate ligase</fullName>
    </alternativeName>
</protein>
<evidence type="ECO:0000255" key="1">
    <source>
        <dbReference type="HAMAP-Rule" id="MF_00005"/>
    </source>
</evidence>
<name>ASSY_DICT6</name>
<sequence>MKKEKVVLAYSGGLDTSVAIKWLMQKYSLDVITLTVDIGQGINLDEIKNKAENLGVEKAYVLDLKEEFVKDYIIPAIKSNAMYERVYPLATALSRPLIAKYLVKIAKENGAKYVAHGCTGKGNDQVRIDLGVKALAPDLEIIAPVREWNFSREEEIEYALENNIPIPVSRKSPYSIDENLWGRSIEGGILEDPWQEPPEDIYLWTRFENREPSYIEITFERGVPVELNGVRKDVVEIIEELNKIAGSYGIGRIDHIENRLVGIKSREIYEAPAAIVIIRAHEALEDMVLPRELAHYKKMLEDKYAELVYYGLWFDPFREALQAFMDKTQDRVTGKVKIKLLPWSFSIVGRESPYSLYDHGLATYDKGSTFSTESAVGFIKLFGLQNYLYALKGGNND</sequence>
<accession>B5YAL9</accession>
<organism>
    <name type="scientific">Dictyoglomus thermophilum (strain ATCC 35947 / DSM 3960 / H-6-12)</name>
    <dbReference type="NCBI Taxonomy" id="309799"/>
    <lineage>
        <taxon>Bacteria</taxon>
        <taxon>Pseudomonadati</taxon>
        <taxon>Dictyoglomota</taxon>
        <taxon>Dictyoglomia</taxon>
        <taxon>Dictyoglomales</taxon>
        <taxon>Dictyoglomaceae</taxon>
        <taxon>Dictyoglomus</taxon>
    </lineage>
</organism>
<reference key="1">
    <citation type="journal article" date="2014" name="Genome Announc.">
        <title>Complete Genome Sequence of the Extreme Thermophile Dictyoglomus thermophilum H-6-12.</title>
        <authorList>
            <person name="Coil D.A."/>
            <person name="Badger J.H."/>
            <person name="Forberger H.C."/>
            <person name="Riggs F."/>
            <person name="Madupu R."/>
            <person name="Fedorova N."/>
            <person name="Ward N."/>
            <person name="Robb F.T."/>
            <person name="Eisen J.A."/>
        </authorList>
    </citation>
    <scope>NUCLEOTIDE SEQUENCE [LARGE SCALE GENOMIC DNA]</scope>
    <source>
        <strain>ATCC 35947 / DSM 3960 / H-6-12</strain>
    </source>
</reference>
<feature type="chain" id="PRO_1000191892" description="Argininosuccinate synthase">
    <location>
        <begin position="1"/>
        <end position="397"/>
    </location>
</feature>
<feature type="binding site" evidence="1">
    <location>
        <begin position="9"/>
        <end position="17"/>
    </location>
    <ligand>
        <name>ATP</name>
        <dbReference type="ChEBI" id="CHEBI:30616"/>
    </ligand>
</feature>
<feature type="binding site" evidence="1">
    <location>
        <position position="87"/>
    </location>
    <ligand>
        <name>L-citrulline</name>
        <dbReference type="ChEBI" id="CHEBI:57743"/>
    </ligand>
</feature>
<feature type="binding site" evidence="1">
    <location>
        <position position="117"/>
    </location>
    <ligand>
        <name>ATP</name>
        <dbReference type="ChEBI" id="CHEBI:30616"/>
    </ligand>
</feature>
<feature type="binding site" evidence="1">
    <location>
        <position position="119"/>
    </location>
    <ligand>
        <name>L-aspartate</name>
        <dbReference type="ChEBI" id="CHEBI:29991"/>
    </ligand>
</feature>
<feature type="binding site" evidence="1">
    <location>
        <position position="123"/>
    </location>
    <ligand>
        <name>L-aspartate</name>
        <dbReference type="ChEBI" id="CHEBI:29991"/>
    </ligand>
</feature>
<feature type="binding site" evidence="1">
    <location>
        <position position="123"/>
    </location>
    <ligand>
        <name>L-citrulline</name>
        <dbReference type="ChEBI" id="CHEBI:57743"/>
    </ligand>
</feature>
<feature type="binding site" evidence="1">
    <location>
        <position position="124"/>
    </location>
    <ligand>
        <name>L-aspartate</name>
        <dbReference type="ChEBI" id="CHEBI:29991"/>
    </ligand>
</feature>
<feature type="binding site" evidence="1">
    <location>
        <position position="127"/>
    </location>
    <ligand>
        <name>L-citrulline</name>
        <dbReference type="ChEBI" id="CHEBI:57743"/>
    </ligand>
</feature>
<feature type="binding site" evidence="1">
    <location>
        <position position="175"/>
    </location>
    <ligand>
        <name>L-citrulline</name>
        <dbReference type="ChEBI" id="CHEBI:57743"/>
    </ligand>
</feature>
<feature type="binding site" evidence="1">
    <location>
        <position position="184"/>
    </location>
    <ligand>
        <name>L-citrulline</name>
        <dbReference type="ChEBI" id="CHEBI:57743"/>
    </ligand>
</feature>
<feature type="binding site" evidence="1">
    <location>
        <position position="257"/>
    </location>
    <ligand>
        <name>L-citrulline</name>
        <dbReference type="ChEBI" id="CHEBI:57743"/>
    </ligand>
</feature>
<feature type="binding site" evidence="1">
    <location>
        <position position="269"/>
    </location>
    <ligand>
        <name>L-citrulline</name>
        <dbReference type="ChEBI" id="CHEBI:57743"/>
    </ligand>
</feature>
<proteinExistence type="inferred from homology"/>
<gene>
    <name evidence="1" type="primary">argG</name>
    <name type="ordered locus">DICTH_1677</name>
</gene>
<comment type="catalytic activity">
    <reaction evidence="1">
        <text>L-citrulline + L-aspartate + ATP = 2-(N(omega)-L-arginino)succinate + AMP + diphosphate + H(+)</text>
        <dbReference type="Rhea" id="RHEA:10932"/>
        <dbReference type="ChEBI" id="CHEBI:15378"/>
        <dbReference type="ChEBI" id="CHEBI:29991"/>
        <dbReference type="ChEBI" id="CHEBI:30616"/>
        <dbReference type="ChEBI" id="CHEBI:33019"/>
        <dbReference type="ChEBI" id="CHEBI:57472"/>
        <dbReference type="ChEBI" id="CHEBI:57743"/>
        <dbReference type="ChEBI" id="CHEBI:456215"/>
        <dbReference type="EC" id="6.3.4.5"/>
    </reaction>
</comment>
<comment type="pathway">
    <text evidence="1">Amino-acid biosynthesis; L-arginine biosynthesis; L-arginine from L-ornithine and carbamoyl phosphate: step 2/3.</text>
</comment>
<comment type="subunit">
    <text evidence="1">Homotetramer.</text>
</comment>
<comment type="subcellular location">
    <subcellularLocation>
        <location evidence="1">Cytoplasm</location>
    </subcellularLocation>
</comment>
<comment type="similarity">
    <text evidence="1">Belongs to the argininosuccinate synthase family. Type 1 subfamily.</text>
</comment>
<keyword id="KW-0028">Amino-acid biosynthesis</keyword>
<keyword id="KW-0055">Arginine biosynthesis</keyword>
<keyword id="KW-0067">ATP-binding</keyword>
<keyword id="KW-0963">Cytoplasm</keyword>
<keyword id="KW-0436">Ligase</keyword>
<keyword id="KW-0547">Nucleotide-binding</keyword>
<dbReference type="EC" id="6.3.4.5" evidence="1"/>
<dbReference type="EMBL" id="CP001146">
    <property type="protein sequence ID" value="ACI19694.1"/>
    <property type="molecule type" value="Genomic_DNA"/>
</dbReference>
<dbReference type="RefSeq" id="WP_012548326.1">
    <property type="nucleotide sequence ID" value="NC_011297.1"/>
</dbReference>
<dbReference type="SMR" id="B5YAL9"/>
<dbReference type="STRING" id="309799.DICTH_1677"/>
<dbReference type="PaxDb" id="309799-DICTH_1677"/>
<dbReference type="KEGG" id="dth:DICTH_1677"/>
<dbReference type="eggNOG" id="COG0137">
    <property type="taxonomic scope" value="Bacteria"/>
</dbReference>
<dbReference type="HOGENOM" id="CLU_032784_4_2_0"/>
<dbReference type="OrthoDB" id="9801641at2"/>
<dbReference type="UniPathway" id="UPA00068">
    <property type="reaction ID" value="UER00113"/>
</dbReference>
<dbReference type="Proteomes" id="UP000001733">
    <property type="component" value="Chromosome"/>
</dbReference>
<dbReference type="GO" id="GO:0005737">
    <property type="term" value="C:cytoplasm"/>
    <property type="evidence" value="ECO:0007669"/>
    <property type="project" value="UniProtKB-SubCell"/>
</dbReference>
<dbReference type="GO" id="GO:0004055">
    <property type="term" value="F:argininosuccinate synthase activity"/>
    <property type="evidence" value="ECO:0007669"/>
    <property type="project" value="UniProtKB-UniRule"/>
</dbReference>
<dbReference type="GO" id="GO:0005524">
    <property type="term" value="F:ATP binding"/>
    <property type="evidence" value="ECO:0007669"/>
    <property type="project" value="UniProtKB-UniRule"/>
</dbReference>
<dbReference type="GO" id="GO:0000053">
    <property type="term" value="P:argininosuccinate metabolic process"/>
    <property type="evidence" value="ECO:0007669"/>
    <property type="project" value="TreeGrafter"/>
</dbReference>
<dbReference type="GO" id="GO:0006526">
    <property type="term" value="P:L-arginine biosynthetic process"/>
    <property type="evidence" value="ECO:0007669"/>
    <property type="project" value="UniProtKB-UniRule"/>
</dbReference>
<dbReference type="GO" id="GO:0000050">
    <property type="term" value="P:urea cycle"/>
    <property type="evidence" value="ECO:0007669"/>
    <property type="project" value="TreeGrafter"/>
</dbReference>
<dbReference type="CDD" id="cd01999">
    <property type="entry name" value="ASS"/>
    <property type="match status" value="1"/>
</dbReference>
<dbReference type="FunFam" id="3.40.50.620:FF:000038">
    <property type="entry name" value="Argininosuccinate synthase"/>
    <property type="match status" value="1"/>
</dbReference>
<dbReference type="FunFam" id="3.90.1260.10:FF:000007">
    <property type="entry name" value="Argininosuccinate synthase"/>
    <property type="match status" value="1"/>
</dbReference>
<dbReference type="Gene3D" id="3.90.1260.10">
    <property type="entry name" value="Argininosuccinate synthetase, chain A, domain 2"/>
    <property type="match status" value="1"/>
</dbReference>
<dbReference type="Gene3D" id="3.40.50.620">
    <property type="entry name" value="HUPs"/>
    <property type="match status" value="1"/>
</dbReference>
<dbReference type="HAMAP" id="MF_00005">
    <property type="entry name" value="Arg_succ_synth_type1"/>
    <property type="match status" value="1"/>
</dbReference>
<dbReference type="InterPro" id="IPR048268">
    <property type="entry name" value="Arginosuc_syn_C"/>
</dbReference>
<dbReference type="InterPro" id="IPR048267">
    <property type="entry name" value="Arginosuc_syn_N"/>
</dbReference>
<dbReference type="InterPro" id="IPR001518">
    <property type="entry name" value="Arginosuc_synth"/>
</dbReference>
<dbReference type="InterPro" id="IPR018223">
    <property type="entry name" value="Arginosuc_synth_CS"/>
</dbReference>
<dbReference type="InterPro" id="IPR023434">
    <property type="entry name" value="Arginosuc_synth_type_1_subfam"/>
</dbReference>
<dbReference type="InterPro" id="IPR024074">
    <property type="entry name" value="AS_cat/multimer_dom_body"/>
</dbReference>
<dbReference type="InterPro" id="IPR014729">
    <property type="entry name" value="Rossmann-like_a/b/a_fold"/>
</dbReference>
<dbReference type="NCBIfam" id="TIGR00032">
    <property type="entry name" value="argG"/>
    <property type="match status" value="1"/>
</dbReference>
<dbReference type="NCBIfam" id="NF001770">
    <property type="entry name" value="PRK00509.1"/>
    <property type="match status" value="1"/>
</dbReference>
<dbReference type="PANTHER" id="PTHR11587">
    <property type="entry name" value="ARGININOSUCCINATE SYNTHASE"/>
    <property type="match status" value="1"/>
</dbReference>
<dbReference type="PANTHER" id="PTHR11587:SF2">
    <property type="entry name" value="ARGININOSUCCINATE SYNTHASE"/>
    <property type="match status" value="1"/>
</dbReference>
<dbReference type="Pfam" id="PF20979">
    <property type="entry name" value="Arginosuc_syn_C"/>
    <property type="match status" value="1"/>
</dbReference>
<dbReference type="Pfam" id="PF00764">
    <property type="entry name" value="Arginosuc_synth"/>
    <property type="match status" value="1"/>
</dbReference>
<dbReference type="SUPFAM" id="SSF52402">
    <property type="entry name" value="Adenine nucleotide alpha hydrolases-like"/>
    <property type="match status" value="1"/>
</dbReference>
<dbReference type="SUPFAM" id="SSF69864">
    <property type="entry name" value="Argininosuccinate synthetase, C-terminal domain"/>
    <property type="match status" value="1"/>
</dbReference>
<dbReference type="PROSITE" id="PS00564">
    <property type="entry name" value="ARGININOSUCCIN_SYN_1"/>
    <property type="match status" value="1"/>
</dbReference>